<protein>
    <recommendedName>
        <fullName evidence="1">Alanine racemase</fullName>
        <ecNumber evidence="1">5.1.1.1</ecNumber>
    </recommendedName>
</protein>
<proteinExistence type="inferred from homology"/>
<name>ALR_NITOC</name>
<feature type="chain" id="PRO_1000066020" description="Alanine racemase">
    <location>
        <begin position="1"/>
        <end position="356"/>
    </location>
</feature>
<feature type="active site" description="Proton acceptor; specific for D-alanine" evidence="1">
    <location>
        <position position="34"/>
    </location>
</feature>
<feature type="active site" description="Proton acceptor; specific for L-alanine" evidence="1">
    <location>
        <position position="253"/>
    </location>
</feature>
<feature type="binding site" evidence="1">
    <location>
        <position position="129"/>
    </location>
    <ligand>
        <name>substrate</name>
    </ligand>
</feature>
<feature type="binding site" evidence="1">
    <location>
        <position position="301"/>
    </location>
    <ligand>
        <name>substrate</name>
    </ligand>
</feature>
<feature type="modified residue" description="N6-(pyridoxal phosphate)lysine" evidence="1">
    <location>
        <position position="34"/>
    </location>
</feature>
<keyword id="KW-0413">Isomerase</keyword>
<keyword id="KW-0663">Pyridoxal phosphate</keyword>
<keyword id="KW-1185">Reference proteome</keyword>
<dbReference type="EC" id="5.1.1.1" evidence="1"/>
<dbReference type="EMBL" id="CP000127">
    <property type="protein sequence ID" value="ABA56754.1"/>
    <property type="molecule type" value="Genomic_DNA"/>
</dbReference>
<dbReference type="RefSeq" id="WP_002813537.1">
    <property type="nucleotide sequence ID" value="NC_007484.1"/>
</dbReference>
<dbReference type="SMR" id="Q3JEJ2"/>
<dbReference type="FunCoup" id="Q3JEJ2">
    <property type="interactions" value="332"/>
</dbReference>
<dbReference type="STRING" id="323261.Noc_0224"/>
<dbReference type="KEGG" id="noc:Noc_0224"/>
<dbReference type="eggNOG" id="COG0787">
    <property type="taxonomic scope" value="Bacteria"/>
</dbReference>
<dbReference type="HOGENOM" id="CLU_028393_1_0_6"/>
<dbReference type="InParanoid" id="Q3JEJ2"/>
<dbReference type="UniPathway" id="UPA00042">
    <property type="reaction ID" value="UER00497"/>
</dbReference>
<dbReference type="Proteomes" id="UP000006838">
    <property type="component" value="Chromosome"/>
</dbReference>
<dbReference type="GO" id="GO:0005829">
    <property type="term" value="C:cytosol"/>
    <property type="evidence" value="ECO:0007669"/>
    <property type="project" value="TreeGrafter"/>
</dbReference>
<dbReference type="GO" id="GO:0008784">
    <property type="term" value="F:alanine racemase activity"/>
    <property type="evidence" value="ECO:0007669"/>
    <property type="project" value="UniProtKB-UniRule"/>
</dbReference>
<dbReference type="GO" id="GO:0030170">
    <property type="term" value="F:pyridoxal phosphate binding"/>
    <property type="evidence" value="ECO:0007669"/>
    <property type="project" value="UniProtKB-UniRule"/>
</dbReference>
<dbReference type="GO" id="GO:0030632">
    <property type="term" value="P:D-alanine biosynthetic process"/>
    <property type="evidence" value="ECO:0007669"/>
    <property type="project" value="UniProtKB-UniRule"/>
</dbReference>
<dbReference type="CDD" id="cd06827">
    <property type="entry name" value="PLPDE_III_AR_proteobact"/>
    <property type="match status" value="1"/>
</dbReference>
<dbReference type="FunFam" id="2.40.37.10:FF:000002">
    <property type="entry name" value="Alanine racemase"/>
    <property type="match status" value="1"/>
</dbReference>
<dbReference type="FunFam" id="3.20.20.10:FF:000002">
    <property type="entry name" value="Alanine racemase"/>
    <property type="match status" value="1"/>
</dbReference>
<dbReference type="Gene3D" id="3.20.20.10">
    <property type="entry name" value="Alanine racemase"/>
    <property type="match status" value="1"/>
</dbReference>
<dbReference type="Gene3D" id="2.40.37.10">
    <property type="entry name" value="Lyase, Ornithine Decarboxylase, Chain A, domain 1"/>
    <property type="match status" value="1"/>
</dbReference>
<dbReference type="HAMAP" id="MF_01201">
    <property type="entry name" value="Ala_racemase"/>
    <property type="match status" value="1"/>
</dbReference>
<dbReference type="InterPro" id="IPR000821">
    <property type="entry name" value="Ala_racemase"/>
</dbReference>
<dbReference type="InterPro" id="IPR009006">
    <property type="entry name" value="Ala_racemase/Decarboxylase_C"/>
</dbReference>
<dbReference type="InterPro" id="IPR011079">
    <property type="entry name" value="Ala_racemase_C"/>
</dbReference>
<dbReference type="InterPro" id="IPR001608">
    <property type="entry name" value="Ala_racemase_N"/>
</dbReference>
<dbReference type="InterPro" id="IPR020622">
    <property type="entry name" value="Ala_racemase_pyridoxalP-BS"/>
</dbReference>
<dbReference type="InterPro" id="IPR029066">
    <property type="entry name" value="PLP-binding_barrel"/>
</dbReference>
<dbReference type="NCBIfam" id="TIGR00492">
    <property type="entry name" value="alr"/>
    <property type="match status" value="1"/>
</dbReference>
<dbReference type="PANTHER" id="PTHR30511">
    <property type="entry name" value="ALANINE RACEMASE"/>
    <property type="match status" value="1"/>
</dbReference>
<dbReference type="PANTHER" id="PTHR30511:SF4">
    <property type="entry name" value="ALANINE RACEMASE, BIOSYNTHETIC"/>
    <property type="match status" value="1"/>
</dbReference>
<dbReference type="Pfam" id="PF00842">
    <property type="entry name" value="Ala_racemase_C"/>
    <property type="match status" value="1"/>
</dbReference>
<dbReference type="Pfam" id="PF01168">
    <property type="entry name" value="Ala_racemase_N"/>
    <property type="match status" value="1"/>
</dbReference>
<dbReference type="PRINTS" id="PR00992">
    <property type="entry name" value="ALARACEMASE"/>
</dbReference>
<dbReference type="SMART" id="SM01005">
    <property type="entry name" value="Ala_racemase_C"/>
    <property type="match status" value="1"/>
</dbReference>
<dbReference type="SUPFAM" id="SSF50621">
    <property type="entry name" value="Alanine racemase C-terminal domain-like"/>
    <property type="match status" value="1"/>
</dbReference>
<dbReference type="SUPFAM" id="SSF51419">
    <property type="entry name" value="PLP-binding barrel"/>
    <property type="match status" value="1"/>
</dbReference>
<dbReference type="PROSITE" id="PS00395">
    <property type="entry name" value="ALANINE_RACEMASE"/>
    <property type="match status" value="1"/>
</dbReference>
<accession>Q3JEJ2</accession>
<sequence length="356" mass="38205">MNFPQAIIDASALRHNLQRVRELAPRSQIMAVVKADGYGHGLTRVADVLVAADAFAVARLEEATALRQAGHRCPVVLLGGISDKEQLQLAAAHRLTLVVHEFAQLDLLERVRITSPLPVWVKADTGMHRLGFPPQVVAKAIARLRCCPAVASVVGLMSHLASADESEDFLTPIQLQTFEGIAAPGLLRSMANSAAVMVYPYAHFDWVRPGLMLYGASPFAHGTGAAVGLKSVMTLQTRLIAIHHLRPGDSIGYGATWVCPEAMTVGVAALGYGDGYPRHAVSGTPVLVNGRPVPLVGRVSMDMITLDLRTQPKAKVGDPVIAWGPNLPVEEVARHATTIPYELLCQVTGRVPRTME</sequence>
<organism>
    <name type="scientific">Nitrosococcus oceani (strain ATCC 19707 / BCRC 17464 / JCM 30415 / NCIMB 11848 / C-107)</name>
    <dbReference type="NCBI Taxonomy" id="323261"/>
    <lineage>
        <taxon>Bacteria</taxon>
        <taxon>Pseudomonadati</taxon>
        <taxon>Pseudomonadota</taxon>
        <taxon>Gammaproteobacteria</taxon>
        <taxon>Chromatiales</taxon>
        <taxon>Chromatiaceae</taxon>
        <taxon>Nitrosococcus</taxon>
    </lineage>
</organism>
<comment type="function">
    <text evidence="1">Catalyzes the interconversion of L-alanine and D-alanine. May also act on other amino acids.</text>
</comment>
<comment type="catalytic activity">
    <reaction evidence="1">
        <text>L-alanine = D-alanine</text>
        <dbReference type="Rhea" id="RHEA:20249"/>
        <dbReference type="ChEBI" id="CHEBI:57416"/>
        <dbReference type="ChEBI" id="CHEBI:57972"/>
        <dbReference type="EC" id="5.1.1.1"/>
    </reaction>
</comment>
<comment type="cofactor">
    <cofactor evidence="1">
        <name>pyridoxal 5'-phosphate</name>
        <dbReference type="ChEBI" id="CHEBI:597326"/>
    </cofactor>
</comment>
<comment type="pathway">
    <text evidence="1">Amino-acid biosynthesis; D-alanine biosynthesis; D-alanine from L-alanine: step 1/1.</text>
</comment>
<comment type="similarity">
    <text evidence="1">Belongs to the alanine racemase family.</text>
</comment>
<reference key="1">
    <citation type="journal article" date="2006" name="Appl. Environ. Microbiol.">
        <title>Complete genome sequence of the marine, chemolithoautotrophic, ammonia-oxidizing bacterium Nitrosococcus oceani ATCC 19707.</title>
        <authorList>
            <person name="Klotz M.G."/>
            <person name="Arp D.J."/>
            <person name="Chain P.S.G."/>
            <person name="El-Sheikh A.F."/>
            <person name="Hauser L.J."/>
            <person name="Hommes N.G."/>
            <person name="Larimer F.W."/>
            <person name="Malfatti S.A."/>
            <person name="Norton J.M."/>
            <person name="Poret-Peterson A.T."/>
            <person name="Vergez L.M."/>
            <person name="Ward B.B."/>
        </authorList>
    </citation>
    <scope>NUCLEOTIDE SEQUENCE [LARGE SCALE GENOMIC DNA]</scope>
    <source>
        <strain>ATCC 19707 / BCRC 17464 / JCM 30415 / NCIMB 11848 / C-107</strain>
    </source>
</reference>
<gene>
    <name type="primary">alr</name>
    <name type="ordered locus">Noc_0224</name>
</gene>
<evidence type="ECO:0000255" key="1">
    <source>
        <dbReference type="HAMAP-Rule" id="MF_01201"/>
    </source>
</evidence>